<feature type="transit peptide" description="Mitochondrion" evidence="3">
    <location>
        <begin position="1"/>
        <end status="unknown"/>
    </location>
</feature>
<feature type="chain" id="PRO_0000331593" description="Delta(3,5)-Delta(2,4)-dienoyl-CoA isomerase, mitochondrial">
    <location>
        <begin status="unknown"/>
        <end position="293"/>
    </location>
</feature>
<feature type="binding site" evidence="1">
    <location>
        <begin position="84"/>
        <end position="88"/>
    </location>
    <ligand>
        <name>substrate</name>
    </ligand>
</feature>
<feature type="binding site" evidence="1">
    <location>
        <position position="142"/>
    </location>
    <ligand>
        <name>substrate</name>
    </ligand>
</feature>
<feature type="site" description="Important for catalytic activity" evidence="1">
    <location>
        <position position="165"/>
    </location>
</feature>
<feature type="site" description="Important for catalytic activity" evidence="2">
    <location>
        <position position="173"/>
    </location>
</feature>
<keyword id="KW-0276">Fatty acid metabolism</keyword>
<keyword id="KW-0413">Isomerase</keyword>
<keyword id="KW-0443">Lipid metabolism</keyword>
<keyword id="KW-0496">Mitochondrion</keyword>
<keyword id="KW-1185">Reference proteome</keyword>
<keyword id="KW-0809">Transit peptide</keyword>
<gene>
    <name type="primary">ech1</name>
    <name type="ORF">DDB_G0282261</name>
</gene>
<proteinExistence type="inferred from homology"/>
<organism>
    <name type="scientific">Dictyostelium discoideum</name>
    <name type="common">Social amoeba</name>
    <dbReference type="NCBI Taxonomy" id="44689"/>
    <lineage>
        <taxon>Eukaryota</taxon>
        <taxon>Amoebozoa</taxon>
        <taxon>Evosea</taxon>
        <taxon>Eumycetozoa</taxon>
        <taxon>Dictyostelia</taxon>
        <taxon>Dictyosteliales</taxon>
        <taxon>Dictyosteliaceae</taxon>
        <taxon>Dictyostelium</taxon>
    </lineage>
</organism>
<name>ECH1_DICDI</name>
<evidence type="ECO:0000250" key="1">
    <source>
        <dbReference type="UniProtKB" id="P42126"/>
    </source>
</evidence>
<evidence type="ECO:0000250" key="2">
    <source>
        <dbReference type="UniProtKB" id="Q62651"/>
    </source>
</evidence>
<evidence type="ECO:0000255" key="3"/>
<evidence type="ECO:0000305" key="4"/>
<reference key="1">
    <citation type="journal article" date="2005" name="Nature">
        <title>The genome of the social amoeba Dictyostelium discoideum.</title>
        <authorList>
            <person name="Eichinger L."/>
            <person name="Pachebat J.A."/>
            <person name="Gloeckner G."/>
            <person name="Rajandream M.A."/>
            <person name="Sucgang R."/>
            <person name="Berriman M."/>
            <person name="Song J."/>
            <person name="Olsen R."/>
            <person name="Szafranski K."/>
            <person name="Xu Q."/>
            <person name="Tunggal B."/>
            <person name="Kummerfeld S."/>
            <person name="Madera M."/>
            <person name="Konfortov B.A."/>
            <person name="Rivero F."/>
            <person name="Bankier A.T."/>
            <person name="Lehmann R."/>
            <person name="Hamlin N."/>
            <person name="Davies R."/>
            <person name="Gaudet P."/>
            <person name="Fey P."/>
            <person name="Pilcher K."/>
            <person name="Chen G."/>
            <person name="Saunders D."/>
            <person name="Sodergren E.J."/>
            <person name="Davis P."/>
            <person name="Kerhornou A."/>
            <person name="Nie X."/>
            <person name="Hall N."/>
            <person name="Anjard C."/>
            <person name="Hemphill L."/>
            <person name="Bason N."/>
            <person name="Farbrother P."/>
            <person name="Desany B."/>
            <person name="Just E."/>
            <person name="Morio T."/>
            <person name="Rost R."/>
            <person name="Churcher C.M."/>
            <person name="Cooper J."/>
            <person name="Haydock S."/>
            <person name="van Driessche N."/>
            <person name="Cronin A."/>
            <person name="Goodhead I."/>
            <person name="Muzny D.M."/>
            <person name="Mourier T."/>
            <person name="Pain A."/>
            <person name="Lu M."/>
            <person name="Harper D."/>
            <person name="Lindsay R."/>
            <person name="Hauser H."/>
            <person name="James K.D."/>
            <person name="Quiles M."/>
            <person name="Madan Babu M."/>
            <person name="Saito T."/>
            <person name="Buchrieser C."/>
            <person name="Wardroper A."/>
            <person name="Felder M."/>
            <person name="Thangavelu M."/>
            <person name="Johnson D."/>
            <person name="Knights A."/>
            <person name="Loulseged H."/>
            <person name="Mungall K.L."/>
            <person name="Oliver K."/>
            <person name="Price C."/>
            <person name="Quail M.A."/>
            <person name="Urushihara H."/>
            <person name="Hernandez J."/>
            <person name="Rabbinowitsch E."/>
            <person name="Steffen D."/>
            <person name="Sanders M."/>
            <person name="Ma J."/>
            <person name="Kohara Y."/>
            <person name="Sharp S."/>
            <person name="Simmonds M.N."/>
            <person name="Spiegler S."/>
            <person name="Tivey A."/>
            <person name="Sugano S."/>
            <person name="White B."/>
            <person name="Walker D."/>
            <person name="Woodward J.R."/>
            <person name="Winckler T."/>
            <person name="Tanaka Y."/>
            <person name="Shaulsky G."/>
            <person name="Schleicher M."/>
            <person name="Weinstock G.M."/>
            <person name="Rosenthal A."/>
            <person name="Cox E.C."/>
            <person name="Chisholm R.L."/>
            <person name="Gibbs R.A."/>
            <person name="Loomis W.F."/>
            <person name="Platzer M."/>
            <person name="Kay R.R."/>
            <person name="Williams J.G."/>
            <person name="Dear P.H."/>
            <person name="Noegel A.A."/>
            <person name="Barrell B.G."/>
            <person name="Kuspa A."/>
        </authorList>
    </citation>
    <scope>NUCLEOTIDE SEQUENCE [LARGE SCALE GENOMIC DNA]</scope>
    <source>
        <strain>AX4</strain>
    </source>
</reference>
<sequence length="293" mass="32522">MEGSLFFTNATPSTSILKITDYKYLRLEKNDSTFVAELVLCRPKQYNSMDDDFYNEFISIYDEIQNDSKIRCVILRGEGKGLTAGLNLGKIAPLITGDSEVSQSQNNLDLFKMIRRWQASLDKINKCSKPTIALIHGACIGGGVDMITACDIRLCSSDAKFSIRETKLSIIADLGTLQRISKIVGSGFARELALTGKDIDAKTAERFNLVNHVYPDHDTLLSEGRKLALSIAQNSPLVVQATKLTLNHADDHTIDEGLYRVALQNAAFLKSDDLNESATSFFEKRQPIFKCNL</sequence>
<protein>
    <recommendedName>
        <fullName evidence="4">Delta(3,5)-Delta(2,4)-dienoyl-CoA isomerase, mitochondrial</fullName>
        <ecNumber evidence="2">5.3.3.-</ecNumber>
    </recommendedName>
</protein>
<accession>Q54SS0</accession>
<comment type="function">
    <text evidence="2">Isomerization of 3-trans,5-cis-dienoyl-CoA to 2-trans,4-trans-dienoyl-CoA.</text>
</comment>
<comment type="catalytic activity">
    <reaction evidence="2">
        <text>(3E,5Z)-octadienoyl-CoA = (2E,4E)-octadienoyl-CoA</text>
        <dbReference type="Rhea" id="RHEA:45244"/>
        <dbReference type="ChEBI" id="CHEBI:62243"/>
        <dbReference type="ChEBI" id="CHEBI:85108"/>
    </reaction>
</comment>
<comment type="catalytic activity">
    <reaction evidence="2">
        <text>(3E,5Z,8Z,11Z,14Z)-eicosapentaenoyl-CoA = (2E,4E,8Z,11Z,14Z)-eicosapentaenoyl-CoA</text>
        <dbReference type="Rhea" id="RHEA:45224"/>
        <dbReference type="ChEBI" id="CHEBI:85090"/>
        <dbReference type="ChEBI" id="CHEBI:85091"/>
    </reaction>
</comment>
<comment type="pathway">
    <text evidence="2">Lipid metabolism; fatty acid beta-oxidation.</text>
</comment>
<comment type="subcellular location">
    <subcellularLocation>
        <location evidence="2">Mitochondrion</location>
    </subcellularLocation>
</comment>
<comment type="similarity">
    <text evidence="4">Belongs to the enoyl-CoA hydratase/isomerase family.</text>
</comment>
<dbReference type="EC" id="5.3.3.-" evidence="2"/>
<dbReference type="EMBL" id="AAFI02000046">
    <property type="protein sequence ID" value="EAL66336.1"/>
    <property type="molecule type" value="Genomic_DNA"/>
</dbReference>
<dbReference type="RefSeq" id="XP_640315.1">
    <property type="nucleotide sequence ID" value="XM_635223.1"/>
</dbReference>
<dbReference type="SMR" id="Q54SS0"/>
<dbReference type="FunCoup" id="Q54SS0">
    <property type="interactions" value="563"/>
</dbReference>
<dbReference type="STRING" id="44689.Q54SS0"/>
<dbReference type="PaxDb" id="44689-DDB0267015"/>
<dbReference type="EnsemblProtists" id="EAL66336">
    <property type="protein sequence ID" value="EAL66336"/>
    <property type="gene ID" value="DDB_G0282261"/>
</dbReference>
<dbReference type="GeneID" id="8623491"/>
<dbReference type="KEGG" id="ddi:DDB_G0282261"/>
<dbReference type="dictyBase" id="DDB_G0282261">
    <property type="gene designation" value="ech1"/>
</dbReference>
<dbReference type="VEuPathDB" id="AmoebaDB:DDB_G0282261"/>
<dbReference type="eggNOG" id="KOG1681">
    <property type="taxonomic scope" value="Eukaryota"/>
</dbReference>
<dbReference type="HOGENOM" id="CLU_009834_7_0_1"/>
<dbReference type="InParanoid" id="Q54SS0"/>
<dbReference type="OMA" id="QYVAHVE"/>
<dbReference type="PhylomeDB" id="Q54SS0"/>
<dbReference type="Reactome" id="R-DDI-9033241">
    <property type="pathway name" value="Peroxisomal protein import"/>
</dbReference>
<dbReference type="Reactome" id="R-DDI-9837999">
    <property type="pathway name" value="Mitochondrial protein degradation"/>
</dbReference>
<dbReference type="UniPathway" id="UPA00659"/>
<dbReference type="PRO" id="PR:Q54SS0"/>
<dbReference type="Proteomes" id="UP000002195">
    <property type="component" value="Chromosome 3"/>
</dbReference>
<dbReference type="GO" id="GO:0005739">
    <property type="term" value="C:mitochondrion"/>
    <property type="evidence" value="ECO:0007669"/>
    <property type="project" value="UniProtKB-SubCell"/>
</dbReference>
<dbReference type="GO" id="GO:0005777">
    <property type="term" value="C:peroxisome"/>
    <property type="evidence" value="ECO:0000250"/>
    <property type="project" value="dictyBase"/>
</dbReference>
<dbReference type="GO" id="GO:0051750">
    <property type="term" value="F:delta(3,5)-delta(2,4)-dienoyl-CoA isomerase activity"/>
    <property type="evidence" value="ECO:0000250"/>
    <property type="project" value="dictyBase"/>
</dbReference>
<dbReference type="GO" id="GO:0006635">
    <property type="term" value="P:fatty acid beta-oxidation"/>
    <property type="evidence" value="ECO:0007669"/>
    <property type="project" value="UniProtKB-UniPathway"/>
</dbReference>
<dbReference type="CDD" id="cd06558">
    <property type="entry name" value="crotonase-like"/>
    <property type="match status" value="1"/>
</dbReference>
<dbReference type="FunFam" id="1.10.12.10:FF:000004">
    <property type="entry name" value="Delta3,5-delta2,4-dienoyl-CoA isomerase"/>
    <property type="match status" value="1"/>
</dbReference>
<dbReference type="FunFam" id="3.90.226.10:FF:000077">
    <property type="entry name" value="Putative enoyl-CoA hydratase echA21"/>
    <property type="match status" value="1"/>
</dbReference>
<dbReference type="Gene3D" id="3.90.226.10">
    <property type="entry name" value="2-enoyl-CoA Hydratase, Chain A, domain 1"/>
    <property type="match status" value="1"/>
</dbReference>
<dbReference type="Gene3D" id="1.10.12.10">
    <property type="entry name" value="Lyase 2-enoyl-coa Hydratase, Chain A, domain 2"/>
    <property type="match status" value="1"/>
</dbReference>
<dbReference type="InterPro" id="IPR029045">
    <property type="entry name" value="ClpP/crotonase-like_dom_sf"/>
</dbReference>
<dbReference type="InterPro" id="IPR045002">
    <property type="entry name" value="Ech1-like"/>
</dbReference>
<dbReference type="InterPro" id="IPR018376">
    <property type="entry name" value="Enoyl-CoA_hyd/isom_CS"/>
</dbReference>
<dbReference type="InterPro" id="IPR001753">
    <property type="entry name" value="Enoyl-CoA_hydra/iso"/>
</dbReference>
<dbReference type="InterPro" id="IPR014748">
    <property type="entry name" value="Enoyl-CoA_hydra_C"/>
</dbReference>
<dbReference type="PANTHER" id="PTHR43149:SF1">
    <property type="entry name" value="DELTA(3,5)-DELTA(2,4)-DIENOYL-COA ISOMERASE, MITOCHONDRIAL"/>
    <property type="match status" value="1"/>
</dbReference>
<dbReference type="PANTHER" id="PTHR43149">
    <property type="entry name" value="ENOYL-COA HYDRATASE"/>
    <property type="match status" value="1"/>
</dbReference>
<dbReference type="Pfam" id="PF00378">
    <property type="entry name" value="ECH_1"/>
    <property type="match status" value="1"/>
</dbReference>
<dbReference type="SUPFAM" id="SSF52096">
    <property type="entry name" value="ClpP/crotonase"/>
    <property type="match status" value="1"/>
</dbReference>
<dbReference type="PROSITE" id="PS00166">
    <property type="entry name" value="ENOYL_COA_HYDRATASE"/>
    <property type="match status" value="1"/>
</dbReference>